<feature type="chain" id="PRO_0000282804" description="Ribosomal RNA large subunit methyltransferase E">
    <location>
        <begin position="1"/>
        <end position="209"/>
    </location>
</feature>
<feature type="active site" description="Proton acceptor" evidence="1">
    <location>
        <position position="164"/>
    </location>
</feature>
<feature type="binding site" evidence="1">
    <location>
        <position position="63"/>
    </location>
    <ligand>
        <name>S-adenosyl-L-methionine</name>
        <dbReference type="ChEBI" id="CHEBI:59789"/>
    </ligand>
</feature>
<feature type="binding site" evidence="1">
    <location>
        <position position="65"/>
    </location>
    <ligand>
        <name>S-adenosyl-L-methionine</name>
        <dbReference type="ChEBI" id="CHEBI:59789"/>
    </ligand>
</feature>
<feature type="binding site" evidence="1">
    <location>
        <position position="83"/>
    </location>
    <ligand>
        <name>S-adenosyl-L-methionine</name>
        <dbReference type="ChEBI" id="CHEBI:59789"/>
    </ligand>
</feature>
<feature type="binding site" evidence="1">
    <location>
        <position position="99"/>
    </location>
    <ligand>
        <name>S-adenosyl-L-methionine</name>
        <dbReference type="ChEBI" id="CHEBI:59789"/>
    </ligand>
</feature>
<feature type="binding site" evidence="1">
    <location>
        <position position="124"/>
    </location>
    <ligand>
        <name>S-adenosyl-L-methionine</name>
        <dbReference type="ChEBI" id="CHEBI:59789"/>
    </ligand>
</feature>
<accession>Q3YX62</accession>
<keyword id="KW-0963">Cytoplasm</keyword>
<keyword id="KW-0489">Methyltransferase</keyword>
<keyword id="KW-1185">Reference proteome</keyword>
<keyword id="KW-0698">rRNA processing</keyword>
<keyword id="KW-0949">S-adenosyl-L-methionine</keyword>
<keyword id="KW-0808">Transferase</keyword>
<proteinExistence type="inferred from homology"/>
<gene>
    <name evidence="1" type="primary">rlmE</name>
    <name evidence="1" type="synonym">ftsJ</name>
    <name evidence="1" type="synonym">rrmJ</name>
    <name type="ordered locus">SSON_3327</name>
</gene>
<sequence>MTGKKRSASSSRWLQEHFSDKYVQQAQKKGLRSRAWFKLDEIQQSDKLFKPGMTVVDLGAAPGGWSQYVVTQIGGKGRIIACDLLPMDPIVGVDFLQGDFRDELVMKALLERVGDSKVQVVMSDMAPNMSGTPAVDIPRAMYLVELALEMCRDVLAPGGSFVVKVFQGEGFDEYLREIRSLFTKVKVRKPDSSRARSREVYIVATGRKP</sequence>
<name>RLME_SHISS</name>
<evidence type="ECO:0000255" key="1">
    <source>
        <dbReference type="HAMAP-Rule" id="MF_01547"/>
    </source>
</evidence>
<reference key="1">
    <citation type="journal article" date="2005" name="Nucleic Acids Res.">
        <title>Genome dynamics and diversity of Shigella species, the etiologic agents of bacillary dysentery.</title>
        <authorList>
            <person name="Yang F."/>
            <person name="Yang J."/>
            <person name="Zhang X."/>
            <person name="Chen L."/>
            <person name="Jiang Y."/>
            <person name="Yan Y."/>
            <person name="Tang X."/>
            <person name="Wang J."/>
            <person name="Xiong Z."/>
            <person name="Dong J."/>
            <person name="Xue Y."/>
            <person name="Zhu Y."/>
            <person name="Xu X."/>
            <person name="Sun L."/>
            <person name="Chen S."/>
            <person name="Nie H."/>
            <person name="Peng J."/>
            <person name="Xu J."/>
            <person name="Wang Y."/>
            <person name="Yuan Z."/>
            <person name="Wen Y."/>
            <person name="Yao Z."/>
            <person name="Shen Y."/>
            <person name="Qiang B."/>
            <person name="Hou Y."/>
            <person name="Yu J."/>
            <person name="Jin Q."/>
        </authorList>
    </citation>
    <scope>NUCLEOTIDE SEQUENCE [LARGE SCALE GENOMIC DNA]</scope>
    <source>
        <strain>Ss046</strain>
    </source>
</reference>
<dbReference type="EC" id="2.1.1.166" evidence="1"/>
<dbReference type="EMBL" id="CP000038">
    <property type="protein sequence ID" value="AAZ89900.1"/>
    <property type="molecule type" value="Genomic_DNA"/>
</dbReference>
<dbReference type="RefSeq" id="WP_000145975.1">
    <property type="nucleotide sequence ID" value="NC_007384.1"/>
</dbReference>
<dbReference type="SMR" id="Q3YX62"/>
<dbReference type="GeneID" id="93778802"/>
<dbReference type="KEGG" id="ssn:SSON_3327"/>
<dbReference type="HOGENOM" id="CLU_009422_4_0_6"/>
<dbReference type="Proteomes" id="UP000002529">
    <property type="component" value="Chromosome"/>
</dbReference>
<dbReference type="GO" id="GO:0005737">
    <property type="term" value="C:cytoplasm"/>
    <property type="evidence" value="ECO:0007669"/>
    <property type="project" value="UniProtKB-SubCell"/>
</dbReference>
<dbReference type="GO" id="GO:0008650">
    <property type="term" value="F:rRNA (uridine-2'-O-)-methyltransferase activity"/>
    <property type="evidence" value="ECO:0007669"/>
    <property type="project" value="UniProtKB-UniRule"/>
</dbReference>
<dbReference type="CDD" id="cd02440">
    <property type="entry name" value="AdoMet_MTases"/>
    <property type="match status" value="1"/>
</dbReference>
<dbReference type="FunFam" id="3.40.50.150:FF:000005">
    <property type="entry name" value="Ribosomal RNA large subunit methyltransferase E"/>
    <property type="match status" value="1"/>
</dbReference>
<dbReference type="Gene3D" id="3.40.50.150">
    <property type="entry name" value="Vaccinia Virus protein VP39"/>
    <property type="match status" value="1"/>
</dbReference>
<dbReference type="HAMAP" id="MF_01547">
    <property type="entry name" value="RNA_methyltr_E"/>
    <property type="match status" value="1"/>
</dbReference>
<dbReference type="InterPro" id="IPR050082">
    <property type="entry name" value="RNA_methyltr_RlmE"/>
</dbReference>
<dbReference type="InterPro" id="IPR002877">
    <property type="entry name" value="RNA_MeTrfase_FtsJ_dom"/>
</dbReference>
<dbReference type="InterPro" id="IPR015507">
    <property type="entry name" value="rRNA-MeTfrase_E"/>
</dbReference>
<dbReference type="InterPro" id="IPR004512">
    <property type="entry name" value="rRNA_MeTrfase_gammaproteobac"/>
</dbReference>
<dbReference type="InterPro" id="IPR029063">
    <property type="entry name" value="SAM-dependent_MTases_sf"/>
</dbReference>
<dbReference type="NCBIfam" id="NF008390">
    <property type="entry name" value="PRK11188.1"/>
    <property type="match status" value="1"/>
</dbReference>
<dbReference type="NCBIfam" id="TIGR00438">
    <property type="entry name" value="rrmJ"/>
    <property type="match status" value="1"/>
</dbReference>
<dbReference type="PANTHER" id="PTHR10920">
    <property type="entry name" value="RIBOSOMAL RNA METHYLTRANSFERASE"/>
    <property type="match status" value="1"/>
</dbReference>
<dbReference type="PANTHER" id="PTHR10920:SF18">
    <property type="entry name" value="RRNA METHYLTRANSFERASE 2, MITOCHONDRIAL"/>
    <property type="match status" value="1"/>
</dbReference>
<dbReference type="Pfam" id="PF01728">
    <property type="entry name" value="FtsJ"/>
    <property type="match status" value="1"/>
</dbReference>
<dbReference type="PIRSF" id="PIRSF005461">
    <property type="entry name" value="23S_rRNA_mtase"/>
    <property type="match status" value="1"/>
</dbReference>
<dbReference type="SUPFAM" id="SSF53335">
    <property type="entry name" value="S-adenosyl-L-methionine-dependent methyltransferases"/>
    <property type="match status" value="1"/>
</dbReference>
<protein>
    <recommendedName>
        <fullName evidence="1">Ribosomal RNA large subunit methyltransferase E</fullName>
        <ecNumber evidence="1">2.1.1.166</ecNumber>
    </recommendedName>
    <alternativeName>
        <fullName evidence="1">23S rRNA Um2552 methyltransferase</fullName>
    </alternativeName>
    <alternativeName>
        <fullName evidence="1">rRNA (uridine-2'-O-)-methyltransferase</fullName>
    </alternativeName>
</protein>
<comment type="function">
    <text evidence="1">Specifically methylates the uridine in position 2552 of 23S rRNA at the 2'-O position of the ribose in the fully assembled 50S ribosomal subunit.</text>
</comment>
<comment type="catalytic activity">
    <reaction evidence="1">
        <text>uridine(2552) in 23S rRNA + S-adenosyl-L-methionine = 2'-O-methyluridine(2552) in 23S rRNA + S-adenosyl-L-homocysteine + H(+)</text>
        <dbReference type="Rhea" id="RHEA:42720"/>
        <dbReference type="Rhea" id="RHEA-COMP:10202"/>
        <dbReference type="Rhea" id="RHEA-COMP:10203"/>
        <dbReference type="ChEBI" id="CHEBI:15378"/>
        <dbReference type="ChEBI" id="CHEBI:57856"/>
        <dbReference type="ChEBI" id="CHEBI:59789"/>
        <dbReference type="ChEBI" id="CHEBI:65315"/>
        <dbReference type="ChEBI" id="CHEBI:74478"/>
        <dbReference type="EC" id="2.1.1.166"/>
    </reaction>
</comment>
<comment type="subcellular location">
    <subcellularLocation>
        <location evidence="1">Cytoplasm</location>
    </subcellularLocation>
</comment>
<comment type="similarity">
    <text evidence="1">Belongs to the class I-like SAM-binding methyltransferase superfamily. RNA methyltransferase RlmE family.</text>
</comment>
<organism>
    <name type="scientific">Shigella sonnei (strain Ss046)</name>
    <dbReference type="NCBI Taxonomy" id="300269"/>
    <lineage>
        <taxon>Bacteria</taxon>
        <taxon>Pseudomonadati</taxon>
        <taxon>Pseudomonadota</taxon>
        <taxon>Gammaproteobacteria</taxon>
        <taxon>Enterobacterales</taxon>
        <taxon>Enterobacteriaceae</taxon>
        <taxon>Shigella</taxon>
    </lineage>
</organism>